<name>FABH_BRUA2</name>
<sequence>MIRSVVRGIGSALPKRVMKNTDFEGIVETSDEWIVQRTGIRERHIAGEGETTVSLGAAAARAAIENAGLQPSDIDLVLLATSTPNNTFPASAVAIQRELGITRGFAFDLQAVCSGFIYAITTADLYIRGGMARRVLVIGAETFSRILDWTDRTTCVLFGDGAGAIVLEAAEGHGLTSDRGILAANLRSDGNHKEKLYVDGGPSTTQTVGHLRMEGREVFKHAVGMITDVIEASFEATGLTAEDIDWFVPHQANKRIIDASAKKLHIAEEKVVITVDRHGNTSAASVPLALATAVADGRIKKGDLVLLEAMGGGFTWGAVLVRW</sequence>
<feature type="chain" id="PRO_1000187847" description="Beta-ketoacyl-[acyl-carrier-protein] synthase III">
    <location>
        <begin position="1"/>
        <end position="323"/>
    </location>
</feature>
<feature type="region of interest" description="ACP-binding" evidence="1">
    <location>
        <begin position="251"/>
        <end position="255"/>
    </location>
</feature>
<feature type="active site" evidence="1">
    <location>
        <position position="113"/>
    </location>
</feature>
<feature type="active site" evidence="1">
    <location>
        <position position="250"/>
    </location>
</feature>
<feature type="active site" evidence="1">
    <location>
        <position position="280"/>
    </location>
</feature>
<proteinExistence type="inferred from homology"/>
<comment type="function">
    <text evidence="1">Catalyzes the condensation reaction of fatty acid synthesis by the addition to an acyl acceptor of two carbons from malonyl-ACP. Catalyzes the first condensation reaction which initiates fatty acid synthesis and may therefore play a role in governing the total rate of fatty acid production. Possesses both acetoacetyl-ACP synthase and acetyl transacylase activities. Its substrate specificity determines the biosynthesis of branched-chain and/or straight-chain of fatty acids.</text>
</comment>
<comment type="catalytic activity">
    <reaction evidence="1">
        <text>malonyl-[ACP] + acetyl-CoA + H(+) = 3-oxobutanoyl-[ACP] + CO2 + CoA</text>
        <dbReference type="Rhea" id="RHEA:12080"/>
        <dbReference type="Rhea" id="RHEA-COMP:9623"/>
        <dbReference type="Rhea" id="RHEA-COMP:9625"/>
        <dbReference type="ChEBI" id="CHEBI:15378"/>
        <dbReference type="ChEBI" id="CHEBI:16526"/>
        <dbReference type="ChEBI" id="CHEBI:57287"/>
        <dbReference type="ChEBI" id="CHEBI:57288"/>
        <dbReference type="ChEBI" id="CHEBI:78449"/>
        <dbReference type="ChEBI" id="CHEBI:78450"/>
        <dbReference type="EC" id="2.3.1.180"/>
    </reaction>
</comment>
<comment type="pathway">
    <text evidence="1">Lipid metabolism; fatty acid biosynthesis.</text>
</comment>
<comment type="subunit">
    <text evidence="1">Homodimer.</text>
</comment>
<comment type="subcellular location">
    <subcellularLocation>
        <location evidence="1">Cytoplasm</location>
    </subcellularLocation>
</comment>
<comment type="domain">
    <text evidence="1">The last Arg residue of the ACP-binding site is essential for the weak association between ACP/AcpP and FabH.</text>
</comment>
<comment type="similarity">
    <text evidence="1">Belongs to the thiolase-like superfamily. FabH family.</text>
</comment>
<accession>Q2YNB9</accession>
<keyword id="KW-0012">Acyltransferase</keyword>
<keyword id="KW-0963">Cytoplasm</keyword>
<keyword id="KW-0275">Fatty acid biosynthesis</keyword>
<keyword id="KW-0276">Fatty acid metabolism</keyword>
<keyword id="KW-0444">Lipid biosynthesis</keyword>
<keyword id="KW-0443">Lipid metabolism</keyword>
<keyword id="KW-0511">Multifunctional enzyme</keyword>
<keyword id="KW-1185">Reference proteome</keyword>
<keyword id="KW-0808">Transferase</keyword>
<gene>
    <name evidence="1" type="primary">fabH</name>
    <name type="ordered locus">BAB1_0798</name>
</gene>
<organism>
    <name type="scientific">Brucella abortus (strain 2308)</name>
    <dbReference type="NCBI Taxonomy" id="359391"/>
    <lineage>
        <taxon>Bacteria</taxon>
        <taxon>Pseudomonadati</taxon>
        <taxon>Pseudomonadota</taxon>
        <taxon>Alphaproteobacteria</taxon>
        <taxon>Hyphomicrobiales</taxon>
        <taxon>Brucellaceae</taxon>
        <taxon>Brucella/Ochrobactrum group</taxon>
        <taxon>Brucella</taxon>
    </lineage>
</organism>
<evidence type="ECO:0000255" key="1">
    <source>
        <dbReference type="HAMAP-Rule" id="MF_01815"/>
    </source>
</evidence>
<dbReference type="EC" id="2.3.1.180" evidence="1"/>
<dbReference type="EMBL" id="AM040264">
    <property type="protein sequence ID" value="CAJ10754.1"/>
    <property type="molecule type" value="Genomic_DNA"/>
</dbReference>
<dbReference type="RefSeq" id="WP_002963913.1">
    <property type="nucleotide sequence ID" value="NZ_KN046823.1"/>
</dbReference>
<dbReference type="SMR" id="Q2YNB9"/>
<dbReference type="STRING" id="359391.BAB1_0798"/>
<dbReference type="KEGG" id="bmf:BAB1_0798"/>
<dbReference type="PATRIC" id="fig|359391.11.peg.3109"/>
<dbReference type="HOGENOM" id="CLU_039592_3_1_5"/>
<dbReference type="UniPathway" id="UPA00094"/>
<dbReference type="Proteomes" id="UP000002719">
    <property type="component" value="Chromosome I"/>
</dbReference>
<dbReference type="GO" id="GO:0005737">
    <property type="term" value="C:cytoplasm"/>
    <property type="evidence" value="ECO:0007669"/>
    <property type="project" value="UniProtKB-SubCell"/>
</dbReference>
<dbReference type="GO" id="GO:0004315">
    <property type="term" value="F:3-oxoacyl-[acyl-carrier-protein] synthase activity"/>
    <property type="evidence" value="ECO:0007669"/>
    <property type="project" value="InterPro"/>
</dbReference>
<dbReference type="GO" id="GO:0033818">
    <property type="term" value="F:beta-ketoacyl-acyl-carrier-protein synthase III activity"/>
    <property type="evidence" value="ECO:0007669"/>
    <property type="project" value="UniProtKB-UniRule"/>
</dbReference>
<dbReference type="GO" id="GO:0006633">
    <property type="term" value="P:fatty acid biosynthetic process"/>
    <property type="evidence" value="ECO:0007669"/>
    <property type="project" value="UniProtKB-UniRule"/>
</dbReference>
<dbReference type="CDD" id="cd00830">
    <property type="entry name" value="KAS_III"/>
    <property type="match status" value="1"/>
</dbReference>
<dbReference type="FunFam" id="3.40.47.10:FF:000004">
    <property type="entry name" value="3-oxoacyl-[acyl-carrier-protein] synthase 3"/>
    <property type="match status" value="1"/>
</dbReference>
<dbReference type="Gene3D" id="3.40.47.10">
    <property type="match status" value="1"/>
</dbReference>
<dbReference type="HAMAP" id="MF_01815">
    <property type="entry name" value="FabH"/>
    <property type="match status" value="1"/>
</dbReference>
<dbReference type="InterPro" id="IPR013747">
    <property type="entry name" value="ACP_syn_III_C"/>
</dbReference>
<dbReference type="InterPro" id="IPR013751">
    <property type="entry name" value="ACP_syn_III_N"/>
</dbReference>
<dbReference type="InterPro" id="IPR004655">
    <property type="entry name" value="FabH"/>
</dbReference>
<dbReference type="InterPro" id="IPR016039">
    <property type="entry name" value="Thiolase-like"/>
</dbReference>
<dbReference type="NCBIfam" id="TIGR00747">
    <property type="entry name" value="fabH"/>
    <property type="match status" value="1"/>
</dbReference>
<dbReference type="NCBIfam" id="NF006829">
    <property type="entry name" value="PRK09352.1"/>
    <property type="match status" value="1"/>
</dbReference>
<dbReference type="PANTHER" id="PTHR43091">
    <property type="entry name" value="3-OXOACYL-[ACYL-CARRIER-PROTEIN] SYNTHASE"/>
    <property type="match status" value="1"/>
</dbReference>
<dbReference type="PANTHER" id="PTHR43091:SF1">
    <property type="entry name" value="BETA-KETOACYL-[ACYL-CARRIER-PROTEIN] SYNTHASE III, CHLOROPLASTIC"/>
    <property type="match status" value="1"/>
</dbReference>
<dbReference type="Pfam" id="PF08545">
    <property type="entry name" value="ACP_syn_III"/>
    <property type="match status" value="1"/>
</dbReference>
<dbReference type="Pfam" id="PF08541">
    <property type="entry name" value="ACP_syn_III_C"/>
    <property type="match status" value="1"/>
</dbReference>
<dbReference type="SUPFAM" id="SSF53901">
    <property type="entry name" value="Thiolase-like"/>
    <property type="match status" value="1"/>
</dbReference>
<protein>
    <recommendedName>
        <fullName evidence="1">Beta-ketoacyl-[acyl-carrier-protein] synthase III</fullName>
        <shortName evidence="1">Beta-ketoacyl-ACP synthase III</shortName>
        <shortName evidence="1">KAS III</shortName>
        <ecNumber evidence="1">2.3.1.180</ecNumber>
    </recommendedName>
    <alternativeName>
        <fullName evidence="1">3-oxoacyl-[acyl-carrier-protein] synthase 3</fullName>
    </alternativeName>
    <alternativeName>
        <fullName evidence="1">3-oxoacyl-[acyl-carrier-protein] synthase III</fullName>
    </alternativeName>
</protein>
<reference key="1">
    <citation type="journal article" date="2005" name="Infect. Immun.">
        <title>Whole-genome analyses of speciation events in pathogenic Brucellae.</title>
        <authorList>
            <person name="Chain P.S."/>
            <person name="Comerci D.J."/>
            <person name="Tolmasky M.E."/>
            <person name="Larimer F.W."/>
            <person name="Malfatti S.A."/>
            <person name="Vergez L.M."/>
            <person name="Aguero F."/>
            <person name="Land M.L."/>
            <person name="Ugalde R.A."/>
            <person name="Garcia E."/>
        </authorList>
    </citation>
    <scope>NUCLEOTIDE SEQUENCE [LARGE SCALE GENOMIC DNA]</scope>
    <source>
        <strain>2308</strain>
    </source>
</reference>